<protein>
    <recommendedName>
        <fullName>Neuromedin-K receptor</fullName>
        <shortName>NKR</shortName>
    </recommendedName>
    <alternativeName>
        <fullName>NK-3 receptor</fullName>
        <shortName>NK-3R</shortName>
    </alternativeName>
    <alternativeName>
        <fullName>Neurokinin B receptor</fullName>
    </alternativeName>
    <alternativeName>
        <fullName>Tachykinin receptor 3</fullName>
    </alternativeName>
</protein>
<gene>
    <name type="primary">TACR3</name>
</gene>
<reference key="1">
    <citation type="journal article" date="1992" name="Proc. Natl. Acad. Sci. U.S.A.">
        <title>Expression cloning of cDNA encoding a seven-helix receptor from human placenta with affinity for opioid ligands.</title>
        <authorList>
            <person name="Xie G.-X."/>
            <person name="Miyajima A."/>
            <person name="Goldstein A."/>
        </authorList>
    </citation>
    <scope>NUCLEOTIDE SEQUENCE [MRNA]</scope>
    <source>
        <tissue>Placenta</tissue>
    </source>
</reference>
<reference key="2">
    <citation type="journal article" date="1996" name="Biochem. J.">
        <title>Functional characterization by heterologous expression of a novel cloned tachykinin peptide receptor.</title>
        <authorList>
            <person name="Donaldson L.F."/>
            <person name="Haskell C.A."/>
            <person name="Hanley M.R."/>
        </authorList>
    </citation>
    <scope>SHOWS THAT IT IS NOT AN OPIOID RECEPTOR</scope>
</reference>
<reference key="3">
    <citation type="journal article" date="2002" name="Eur. J. Pharmacol.">
        <title>The human tachykinin NK1 (short form) and tachykinin NK4 receptor: a reappraisal.</title>
        <authorList>
            <person name="Page N.M."/>
            <person name="Bell N.J."/>
        </authorList>
    </citation>
    <scope>NUCLEOTIDE SEQUENCE [MRNA]</scope>
    <scope>SHOWS THAT IT IS NOT A HUMAN SEQUENCE</scope>
</reference>
<reference key="4">
    <citation type="submission" date="2000-04" db="EMBL/GenBank/DDBJ databases">
        <title>Cloning and sequencing of guinea pig NK3 receptor.</title>
        <authorList>
            <person name="Stumm R.K."/>
            <person name="Derst C."/>
            <person name="Schaefer M.K.H."/>
            <person name="Weihe E."/>
        </authorList>
    </citation>
    <scope>NUCLEOTIDE SEQUENCE [MRNA]</scope>
</reference>
<evidence type="ECO:0000250" key="1"/>
<evidence type="ECO:0000255" key="2"/>
<evidence type="ECO:0000255" key="3">
    <source>
        <dbReference type="PROSITE-ProRule" id="PRU00521"/>
    </source>
</evidence>
<evidence type="ECO:0000256" key="4">
    <source>
        <dbReference type="SAM" id="MobiDB-lite"/>
    </source>
</evidence>
<evidence type="ECO:0000305" key="5"/>
<evidence type="ECO:0000305" key="6">
    <source>
    </source>
</evidence>
<accession>P30098</accession>
<accession>Q925R4</accession>
<comment type="function">
    <text>This is a receptor for the tachykinin neuropeptide neuromedin-K (neurokinin B). It is associated with G proteins that activate a phosphatidylinositol-calcium second messenger system.</text>
</comment>
<comment type="subcellular location">
    <subcellularLocation>
        <location>Cell membrane</location>
        <topology>Multi-pass membrane protein</topology>
    </subcellularLocation>
</comment>
<comment type="PTM">
    <text>The anchoring of this receptor to the plasma membrane is probably mediated by the palmitoylation of a cysteine residue.</text>
</comment>
<comment type="similarity">
    <text evidence="3">Belongs to the G-protein coupled receptor 1 family.</text>
</comment>
<comment type="caution">
    <text evidence="6">Was originally (PubMed:1315051) thought to be a kappa-type opioid receptor and to originate from human. PubMed:8947459 showed that it is a tachikinin receptor and was termed NK-4R. PubMed:11864635 shows that it is from guinea pig and is NK-3R.</text>
</comment>
<proteinExistence type="evidence at transcript level"/>
<dbReference type="EMBL" id="M84605">
    <property type="protein sequence ID" value="AAA36395.1"/>
    <property type="molecule type" value="mRNA"/>
</dbReference>
<dbReference type="EMBL" id="AF426173">
    <property type="protein sequence ID" value="AAL78507.1"/>
    <property type="molecule type" value="mRNA"/>
</dbReference>
<dbReference type="EMBL" id="AF255393">
    <property type="protein sequence ID" value="AAK49193.1"/>
    <property type="molecule type" value="mRNA"/>
</dbReference>
<dbReference type="PIR" id="A44081">
    <property type="entry name" value="A44081"/>
</dbReference>
<dbReference type="RefSeq" id="NP_001166200.1">
    <property type="nucleotide sequence ID" value="NM_001172729.1"/>
</dbReference>
<dbReference type="SMR" id="P30098"/>
<dbReference type="FunCoup" id="P30098">
    <property type="interactions" value="698"/>
</dbReference>
<dbReference type="STRING" id="10141.ENSCPOP00000014870"/>
<dbReference type="BindingDB" id="P30098"/>
<dbReference type="ChEMBL" id="CHEMBL3799"/>
<dbReference type="GlyCosmos" id="P30098">
    <property type="glycosylation" value="2 sites, No reported glycans"/>
</dbReference>
<dbReference type="GeneID" id="100135627"/>
<dbReference type="KEGG" id="cpoc:100135627"/>
<dbReference type="CTD" id="6870"/>
<dbReference type="eggNOG" id="KOG4219">
    <property type="taxonomic scope" value="Eukaryota"/>
</dbReference>
<dbReference type="InParanoid" id="P30098"/>
<dbReference type="OrthoDB" id="5981855at2759"/>
<dbReference type="PRO" id="PR:P30098"/>
<dbReference type="Proteomes" id="UP000005447">
    <property type="component" value="Unassembled WGS sequence"/>
</dbReference>
<dbReference type="GO" id="GO:0005886">
    <property type="term" value="C:plasma membrane"/>
    <property type="evidence" value="ECO:0000304"/>
    <property type="project" value="ProtInc"/>
</dbReference>
<dbReference type="GO" id="GO:0097225">
    <property type="term" value="C:sperm midpiece"/>
    <property type="evidence" value="ECO:0007669"/>
    <property type="project" value="TreeGrafter"/>
</dbReference>
<dbReference type="GO" id="GO:0004995">
    <property type="term" value="F:tachykinin receptor activity"/>
    <property type="evidence" value="ECO:0000304"/>
    <property type="project" value="ProtInc"/>
</dbReference>
<dbReference type="GO" id="GO:0004888">
    <property type="term" value="F:transmembrane signaling receptor activity"/>
    <property type="evidence" value="ECO:0000304"/>
    <property type="project" value="ProtInc"/>
</dbReference>
<dbReference type="GO" id="GO:0007166">
    <property type="term" value="P:cell surface receptor signaling pathway"/>
    <property type="evidence" value="ECO:0000304"/>
    <property type="project" value="ProtInc"/>
</dbReference>
<dbReference type="GO" id="GO:0007186">
    <property type="term" value="P:G protein-coupled receptor signaling pathway"/>
    <property type="evidence" value="ECO:0000304"/>
    <property type="project" value="ProtInc"/>
</dbReference>
<dbReference type="GO" id="GO:1902093">
    <property type="term" value="P:positive regulation of flagellated sperm motility"/>
    <property type="evidence" value="ECO:0007669"/>
    <property type="project" value="TreeGrafter"/>
</dbReference>
<dbReference type="FunFam" id="1.20.1070.10:FF:000078">
    <property type="entry name" value="Neuromedin-K receptor"/>
    <property type="match status" value="1"/>
</dbReference>
<dbReference type="Gene3D" id="1.20.1070.10">
    <property type="entry name" value="Rhodopsin 7-helix transmembrane proteins"/>
    <property type="match status" value="1"/>
</dbReference>
<dbReference type="InterPro" id="IPR000276">
    <property type="entry name" value="GPCR_Rhodpsn"/>
</dbReference>
<dbReference type="InterPro" id="IPR017452">
    <property type="entry name" value="GPCR_Rhodpsn_7TM"/>
</dbReference>
<dbReference type="InterPro" id="IPR001681">
    <property type="entry name" value="Neurokn_rcpt"/>
</dbReference>
<dbReference type="InterPro" id="IPR001013">
    <property type="entry name" value="NK3_rcpt"/>
</dbReference>
<dbReference type="PANTHER" id="PTHR46925">
    <property type="entry name" value="G-PROTEIN COUPLED RECEPTOR TKR-1-RELATED"/>
    <property type="match status" value="1"/>
</dbReference>
<dbReference type="PANTHER" id="PTHR46925:SF1">
    <property type="entry name" value="NEUROMEDIN-K RECEPTOR"/>
    <property type="match status" value="1"/>
</dbReference>
<dbReference type="Pfam" id="PF00001">
    <property type="entry name" value="7tm_1"/>
    <property type="match status" value="1"/>
</dbReference>
<dbReference type="PRINTS" id="PR00237">
    <property type="entry name" value="GPCRRHODOPSN"/>
</dbReference>
<dbReference type="PRINTS" id="PR01026">
    <property type="entry name" value="NEUROKININ3R"/>
</dbReference>
<dbReference type="PRINTS" id="PR00244">
    <property type="entry name" value="NEUROKININR"/>
</dbReference>
<dbReference type="SUPFAM" id="SSF81321">
    <property type="entry name" value="Family A G protein-coupled receptor-like"/>
    <property type="match status" value="1"/>
</dbReference>
<dbReference type="PROSITE" id="PS00237">
    <property type="entry name" value="G_PROTEIN_RECEP_F1_1"/>
    <property type="match status" value="1"/>
</dbReference>
<dbReference type="PROSITE" id="PS50262">
    <property type="entry name" value="G_PROTEIN_RECEP_F1_2"/>
    <property type="match status" value="1"/>
</dbReference>
<name>NK3R_CAVPO</name>
<feature type="chain" id="PRO_0000069898" description="Neuromedin-K receptor">
    <location>
        <begin position="1"/>
        <end position="440"/>
    </location>
</feature>
<feature type="topological domain" description="Extracellular" evidence="2">
    <location>
        <begin position="1"/>
        <end position="59"/>
    </location>
</feature>
<feature type="transmembrane region" description="Helical; Name=1" evidence="2">
    <location>
        <begin position="60"/>
        <end position="82"/>
    </location>
</feature>
<feature type="topological domain" description="Cytoplasmic" evidence="2">
    <location>
        <begin position="83"/>
        <end position="92"/>
    </location>
</feature>
<feature type="transmembrane region" description="Helical; Name=2" evidence="2">
    <location>
        <begin position="93"/>
        <end position="114"/>
    </location>
</feature>
<feature type="topological domain" description="Extracellular" evidence="2">
    <location>
        <begin position="115"/>
        <end position="134"/>
    </location>
</feature>
<feature type="transmembrane region" description="Helical; Name=3" evidence="2">
    <location>
        <begin position="135"/>
        <end position="156"/>
    </location>
</feature>
<feature type="topological domain" description="Cytoplasmic" evidence="2">
    <location>
        <begin position="157"/>
        <end position="176"/>
    </location>
</feature>
<feature type="transmembrane region" description="Helical; Name=4" evidence="2">
    <location>
        <begin position="177"/>
        <end position="197"/>
    </location>
</feature>
<feature type="topological domain" description="Extracellular" evidence="2">
    <location>
        <begin position="198"/>
        <end position="220"/>
    </location>
</feature>
<feature type="transmembrane region" description="Helical; Name=5" evidence="2">
    <location>
        <begin position="221"/>
        <end position="245"/>
    </location>
</feature>
<feature type="topological domain" description="Cytoplasmic" evidence="2">
    <location>
        <begin position="246"/>
        <end position="274"/>
    </location>
</feature>
<feature type="transmembrane region" description="Helical; Name=6" evidence="2">
    <location>
        <begin position="275"/>
        <end position="296"/>
    </location>
</feature>
<feature type="topological domain" description="Extracellular" evidence="2">
    <location>
        <begin position="297"/>
        <end position="309"/>
    </location>
</feature>
<feature type="transmembrane region" description="Helical; Name=7" evidence="2">
    <location>
        <begin position="310"/>
        <end position="334"/>
    </location>
</feature>
<feature type="topological domain" description="Cytoplasmic" evidence="2">
    <location>
        <begin position="335"/>
        <end position="440"/>
    </location>
</feature>
<feature type="region of interest" description="Disordered" evidence="4">
    <location>
        <begin position="22"/>
        <end position="46"/>
    </location>
</feature>
<feature type="region of interest" description="Disordered" evidence="4">
    <location>
        <begin position="390"/>
        <end position="440"/>
    </location>
</feature>
<feature type="compositionally biased region" description="Pro residues" evidence="4">
    <location>
        <begin position="32"/>
        <end position="46"/>
    </location>
</feature>
<feature type="compositionally biased region" description="Low complexity" evidence="4">
    <location>
        <begin position="420"/>
        <end position="434"/>
    </location>
</feature>
<feature type="lipid moiety-binding region" description="S-palmitoyl cysteine" evidence="1">
    <location>
        <position position="349"/>
    </location>
</feature>
<feature type="glycosylation site" description="N-linked (GlcNAc...) asparagine" evidence="2">
    <location>
        <position position="7"/>
    </location>
</feature>
<feature type="glycosylation site" description="N-linked (GlcNAc...) asparagine" evidence="2">
    <location>
        <position position="24"/>
    </location>
</feature>
<feature type="disulfide bond" evidence="3">
    <location>
        <begin position="133"/>
        <end position="208"/>
    </location>
</feature>
<feature type="sequence conflict" description="In Ref. 4; AAK49193." evidence="5" ref="4">
    <original>A</original>
    <variation>R</variation>
    <location>
        <position position="59"/>
    </location>
</feature>
<keyword id="KW-1003">Cell membrane</keyword>
<keyword id="KW-1015">Disulfide bond</keyword>
<keyword id="KW-0297">G-protein coupled receptor</keyword>
<keyword id="KW-0325">Glycoprotein</keyword>
<keyword id="KW-0449">Lipoprotein</keyword>
<keyword id="KW-0472">Membrane</keyword>
<keyword id="KW-0564">Palmitate</keyword>
<keyword id="KW-0675">Receptor</keyword>
<keyword id="KW-1185">Reference proteome</keyword>
<keyword id="KW-0807">Transducer</keyword>
<keyword id="KW-0812">Transmembrane</keyword>
<keyword id="KW-1133">Transmembrane helix</keyword>
<sequence length="440" mass="49432">MASPAGNLSAWPGWGWPPPAALRNLTSSPAPTASPSPAPSWTPSPRPGPAHPFLQPPWAVALWSLAYGAVVAVAVLGNLVVIWIVLAHKRMRTVTNSFLVNLAFADAAMAALNALVNFIYALHGEWYFGANYCRFQNFFPITAVFASIYSMTAIAVDRYMAIIDPLKPRLSATATRIVIGSIWILAFLLAFPQCLYSKIKVMPGRTLCYVQWPEGSRQHFTYHMIVIVLVYCFPLLIMGITYTIVGITLWGGEIPGDTCDKYQEQLKAKRKVVKMMIIVVVTFAICWLPYHIYFILTAIYQQLNRWKYIQQVYLASFWLAMSSTMYNPIIYCCLNKRFRAGFKRAFRWCPFIHVSSYDELELKATRLHPMRQSSLYTVTRMESMSVVFDSNDGDSARSSHQKRGTTRDVGSNVCSRRNSKSTSTTASFVSSSHMSVEEGS</sequence>
<organism>
    <name type="scientific">Cavia porcellus</name>
    <name type="common">Guinea pig</name>
    <dbReference type="NCBI Taxonomy" id="10141"/>
    <lineage>
        <taxon>Eukaryota</taxon>
        <taxon>Metazoa</taxon>
        <taxon>Chordata</taxon>
        <taxon>Craniata</taxon>
        <taxon>Vertebrata</taxon>
        <taxon>Euteleostomi</taxon>
        <taxon>Mammalia</taxon>
        <taxon>Eutheria</taxon>
        <taxon>Euarchontoglires</taxon>
        <taxon>Glires</taxon>
        <taxon>Rodentia</taxon>
        <taxon>Hystricomorpha</taxon>
        <taxon>Caviidae</taxon>
        <taxon>Cavia</taxon>
    </lineage>
</organism>